<organism>
    <name type="scientific">Desulfitobacterium hafniense (strain Y51)</name>
    <dbReference type="NCBI Taxonomy" id="138119"/>
    <lineage>
        <taxon>Bacteria</taxon>
        <taxon>Bacillati</taxon>
        <taxon>Bacillota</taxon>
        <taxon>Clostridia</taxon>
        <taxon>Eubacteriales</taxon>
        <taxon>Desulfitobacteriaceae</taxon>
        <taxon>Desulfitobacterium</taxon>
    </lineage>
</organism>
<feature type="chain" id="PRO_1000137679" description="Chaperone protein DnaJ">
    <location>
        <begin position="1"/>
        <end position="377"/>
    </location>
</feature>
<feature type="domain" description="J" evidence="1">
    <location>
        <begin position="4"/>
        <end position="69"/>
    </location>
</feature>
<feature type="repeat" description="CXXCXGXG motif">
    <location>
        <begin position="144"/>
        <end position="151"/>
    </location>
</feature>
<feature type="repeat" description="CXXCXGXG motif">
    <location>
        <begin position="161"/>
        <end position="168"/>
    </location>
</feature>
<feature type="repeat" description="CXXCXGXG motif">
    <location>
        <begin position="187"/>
        <end position="194"/>
    </location>
</feature>
<feature type="repeat" description="CXXCXGXG motif">
    <location>
        <begin position="201"/>
        <end position="208"/>
    </location>
</feature>
<feature type="zinc finger region" description="CR-type" evidence="1">
    <location>
        <begin position="131"/>
        <end position="213"/>
    </location>
</feature>
<feature type="binding site" evidence="1">
    <location>
        <position position="144"/>
    </location>
    <ligand>
        <name>Zn(2+)</name>
        <dbReference type="ChEBI" id="CHEBI:29105"/>
        <label>1</label>
    </ligand>
</feature>
<feature type="binding site" evidence="1">
    <location>
        <position position="147"/>
    </location>
    <ligand>
        <name>Zn(2+)</name>
        <dbReference type="ChEBI" id="CHEBI:29105"/>
        <label>1</label>
    </ligand>
</feature>
<feature type="binding site" evidence="1">
    <location>
        <position position="161"/>
    </location>
    <ligand>
        <name>Zn(2+)</name>
        <dbReference type="ChEBI" id="CHEBI:29105"/>
        <label>2</label>
    </ligand>
</feature>
<feature type="binding site" evidence="1">
    <location>
        <position position="164"/>
    </location>
    <ligand>
        <name>Zn(2+)</name>
        <dbReference type="ChEBI" id="CHEBI:29105"/>
        <label>2</label>
    </ligand>
</feature>
<feature type="binding site" evidence="1">
    <location>
        <position position="187"/>
    </location>
    <ligand>
        <name>Zn(2+)</name>
        <dbReference type="ChEBI" id="CHEBI:29105"/>
        <label>2</label>
    </ligand>
</feature>
<feature type="binding site" evidence="1">
    <location>
        <position position="190"/>
    </location>
    <ligand>
        <name>Zn(2+)</name>
        <dbReference type="ChEBI" id="CHEBI:29105"/>
        <label>2</label>
    </ligand>
</feature>
<feature type="binding site" evidence="1">
    <location>
        <position position="201"/>
    </location>
    <ligand>
        <name>Zn(2+)</name>
        <dbReference type="ChEBI" id="CHEBI:29105"/>
        <label>1</label>
    </ligand>
</feature>
<feature type="binding site" evidence="1">
    <location>
        <position position="204"/>
    </location>
    <ligand>
        <name>Zn(2+)</name>
        <dbReference type="ChEBI" id="CHEBI:29105"/>
        <label>1</label>
    </ligand>
</feature>
<sequence>MKRDYYEVLGVSKSADEQEIKKAYRKLARQYHPDVNPGDKDAEEKFKEATEAYDVLSDTEKRARYDQMGHSAFDPNQQGFGGFGGDFGGFGDIFDMFFGGGGGGGQRRQGPTRGNDLRYDLTITFEEAAFGTEKEIQVPRQETCTECHGSGSAPGTHPTTCSQCHGTGQVKATQRTPFGAIQTARTCPACNGSGQFISSPCKECSGKGTTRKVKTIKVTVPPGSEDGLNLRFSGNGEAGLRGGPSGDLYVVLNVKAHKFFEREGNDVYCEIPITFVQAALGSELDVPTLDGKVKMKIPEGTQTATVFRLRGHGIPYRRGNGRGDQHVRVVVATPTKLTDRQKELLREFGEVTSDQQQMGKKSFFEKVKENIRDAIDL</sequence>
<gene>
    <name evidence="1" type="primary">dnaJ</name>
    <name type="ordered locus">DSY3129</name>
</gene>
<reference key="1">
    <citation type="journal article" date="2006" name="J. Bacteriol.">
        <title>Complete genome sequence of the dehalorespiring bacterium Desulfitobacterium hafniense Y51 and comparison with Dehalococcoides ethenogenes 195.</title>
        <authorList>
            <person name="Nonaka H."/>
            <person name="Keresztes G."/>
            <person name="Shinoda Y."/>
            <person name="Ikenaga Y."/>
            <person name="Abe M."/>
            <person name="Naito K."/>
            <person name="Inatomi K."/>
            <person name="Furukawa K."/>
            <person name="Inui M."/>
            <person name="Yukawa H."/>
        </authorList>
    </citation>
    <scope>NUCLEOTIDE SEQUENCE [LARGE SCALE GENOMIC DNA]</scope>
    <source>
        <strain>Y51</strain>
    </source>
</reference>
<keyword id="KW-0143">Chaperone</keyword>
<keyword id="KW-0963">Cytoplasm</keyword>
<keyword id="KW-0235">DNA replication</keyword>
<keyword id="KW-0479">Metal-binding</keyword>
<keyword id="KW-1185">Reference proteome</keyword>
<keyword id="KW-0677">Repeat</keyword>
<keyword id="KW-0346">Stress response</keyword>
<keyword id="KW-0862">Zinc</keyword>
<keyword id="KW-0863">Zinc-finger</keyword>
<dbReference type="EMBL" id="AP008230">
    <property type="protein sequence ID" value="BAE84918.1"/>
    <property type="molecule type" value="Genomic_DNA"/>
</dbReference>
<dbReference type="RefSeq" id="WP_005816474.1">
    <property type="nucleotide sequence ID" value="NC_007907.1"/>
</dbReference>
<dbReference type="SMR" id="Q24SS4"/>
<dbReference type="STRING" id="138119.DSY3129"/>
<dbReference type="KEGG" id="dsy:DSY3129"/>
<dbReference type="eggNOG" id="COG0484">
    <property type="taxonomic scope" value="Bacteria"/>
</dbReference>
<dbReference type="HOGENOM" id="CLU_017633_0_7_9"/>
<dbReference type="Proteomes" id="UP000001946">
    <property type="component" value="Chromosome"/>
</dbReference>
<dbReference type="GO" id="GO:0005737">
    <property type="term" value="C:cytoplasm"/>
    <property type="evidence" value="ECO:0007669"/>
    <property type="project" value="UniProtKB-SubCell"/>
</dbReference>
<dbReference type="GO" id="GO:0005524">
    <property type="term" value="F:ATP binding"/>
    <property type="evidence" value="ECO:0007669"/>
    <property type="project" value="InterPro"/>
</dbReference>
<dbReference type="GO" id="GO:0031072">
    <property type="term" value="F:heat shock protein binding"/>
    <property type="evidence" value="ECO:0007669"/>
    <property type="project" value="InterPro"/>
</dbReference>
<dbReference type="GO" id="GO:0051082">
    <property type="term" value="F:unfolded protein binding"/>
    <property type="evidence" value="ECO:0007669"/>
    <property type="project" value="UniProtKB-UniRule"/>
</dbReference>
<dbReference type="GO" id="GO:0008270">
    <property type="term" value="F:zinc ion binding"/>
    <property type="evidence" value="ECO:0007669"/>
    <property type="project" value="UniProtKB-UniRule"/>
</dbReference>
<dbReference type="GO" id="GO:0051085">
    <property type="term" value="P:chaperone cofactor-dependent protein refolding"/>
    <property type="evidence" value="ECO:0007669"/>
    <property type="project" value="TreeGrafter"/>
</dbReference>
<dbReference type="GO" id="GO:0006260">
    <property type="term" value="P:DNA replication"/>
    <property type="evidence" value="ECO:0007669"/>
    <property type="project" value="UniProtKB-KW"/>
</dbReference>
<dbReference type="GO" id="GO:0042026">
    <property type="term" value="P:protein refolding"/>
    <property type="evidence" value="ECO:0007669"/>
    <property type="project" value="TreeGrafter"/>
</dbReference>
<dbReference type="GO" id="GO:0009408">
    <property type="term" value="P:response to heat"/>
    <property type="evidence" value="ECO:0007669"/>
    <property type="project" value="InterPro"/>
</dbReference>
<dbReference type="CDD" id="cd06257">
    <property type="entry name" value="DnaJ"/>
    <property type="match status" value="1"/>
</dbReference>
<dbReference type="CDD" id="cd10747">
    <property type="entry name" value="DnaJ_C"/>
    <property type="match status" value="1"/>
</dbReference>
<dbReference type="CDD" id="cd10719">
    <property type="entry name" value="DnaJ_zf"/>
    <property type="match status" value="1"/>
</dbReference>
<dbReference type="FunFam" id="1.10.287.110:FF:000031">
    <property type="entry name" value="Molecular chaperone DnaJ"/>
    <property type="match status" value="1"/>
</dbReference>
<dbReference type="FunFam" id="2.10.230.10:FF:000002">
    <property type="entry name" value="Molecular chaperone DnaJ"/>
    <property type="match status" value="1"/>
</dbReference>
<dbReference type="FunFam" id="2.60.260.20:FF:000004">
    <property type="entry name" value="Molecular chaperone DnaJ"/>
    <property type="match status" value="1"/>
</dbReference>
<dbReference type="Gene3D" id="1.10.287.110">
    <property type="entry name" value="DnaJ domain"/>
    <property type="match status" value="1"/>
</dbReference>
<dbReference type="Gene3D" id="2.10.230.10">
    <property type="entry name" value="Heat shock protein DnaJ, cysteine-rich domain"/>
    <property type="match status" value="1"/>
</dbReference>
<dbReference type="Gene3D" id="2.60.260.20">
    <property type="entry name" value="Urease metallochaperone UreE, N-terminal domain"/>
    <property type="match status" value="2"/>
</dbReference>
<dbReference type="HAMAP" id="MF_01152">
    <property type="entry name" value="DnaJ"/>
    <property type="match status" value="1"/>
</dbReference>
<dbReference type="InterPro" id="IPR012724">
    <property type="entry name" value="DnaJ"/>
</dbReference>
<dbReference type="InterPro" id="IPR002939">
    <property type="entry name" value="DnaJ_C"/>
</dbReference>
<dbReference type="InterPro" id="IPR001623">
    <property type="entry name" value="DnaJ_domain"/>
</dbReference>
<dbReference type="InterPro" id="IPR018253">
    <property type="entry name" value="DnaJ_domain_CS"/>
</dbReference>
<dbReference type="InterPro" id="IPR008971">
    <property type="entry name" value="HSP40/DnaJ_pept-bd"/>
</dbReference>
<dbReference type="InterPro" id="IPR001305">
    <property type="entry name" value="HSP_DnaJ_Cys-rich_dom"/>
</dbReference>
<dbReference type="InterPro" id="IPR036410">
    <property type="entry name" value="HSP_DnaJ_Cys-rich_dom_sf"/>
</dbReference>
<dbReference type="InterPro" id="IPR036869">
    <property type="entry name" value="J_dom_sf"/>
</dbReference>
<dbReference type="NCBIfam" id="TIGR02349">
    <property type="entry name" value="DnaJ_bact"/>
    <property type="match status" value="1"/>
</dbReference>
<dbReference type="NCBIfam" id="NF008035">
    <property type="entry name" value="PRK10767.1"/>
    <property type="match status" value="1"/>
</dbReference>
<dbReference type="PANTHER" id="PTHR43096:SF48">
    <property type="entry name" value="CHAPERONE PROTEIN DNAJ"/>
    <property type="match status" value="1"/>
</dbReference>
<dbReference type="PANTHER" id="PTHR43096">
    <property type="entry name" value="DNAJ HOMOLOG 1, MITOCHONDRIAL-RELATED"/>
    <property type="match status" value="1"/>
</dbReference>
<dbReference type="Pfam" id="PF00226">
    <property type="entry name" value="DnaJ"/>
    <property type="match status" value="1"/>
</dbReference>
<dbReference type="Pfam" id="PF01556">
    <property type="entry name" value="DnaJ_C"/>
    <property type="match status" value="1"/>
</dbReference>
<dbReference type="Pfam" id="PF00684">
    <property type="entry name" value="DnaJ_CXXCXGXG"/>
    <property type="match status" value="1"/>
</dbReference>
<dbReference type="PRINTS" id="PR00625">
    <property type="entry name" value="JDOMAIN"/>
</dbReference>
<dbReference type="SMART" id="SM00271">
    <property type="entry name" value="DnaJ"/>
    <property type="match status" value="1"/>
</dbReference>
<dbReference type="SUPFAM" id="SSF46565">
    <property type="entry name" value="Chaperone J-domain"/>
    <property type="match status" value="1"/>
</dbReference>
<dbReference type="SUPFAM" id="SSF57938">
    <property type="entry name" value="DnaJ/Hsp40 cysteine-rich domain"/>
    <property type="match status" value="1"/>
</dbReference>
<dbReference type="SUPFAM" id="SSF49493">
    <property type="entry name" value="HSP40/DnaJ peptide-binding domain"/>
    <property type="match status" value="2"/>
</dbReference>
<dbReference type="PROSITE" id="PS00636">
    <property type="entry name" value="DNAJ_1"/>
    <property type="match status" value="1"/>
</dbReference>
<dbReference type="PROSITE" id="PS50076">
    <property type="entry name" value="DNAJ_2"/>
    <property type="match status" value="1"/>
</dbReference>
<dbReference type="PROSITE" id="PS51188">
    <property type="entry name" value="ZF_CR"/>
    <property type="match status" value="1"/>
</dbReference>
<evidence type="ECO:0000255" key="1">
    <source>
        <dbReference type="HAMAP-Rule" id="MF_01152"/>
    </source>
</evidence>
<accession>Q24SS4</accession>
<proteinExistence type="inferred from homology"/>
<comment type="function">
    <text evidence="1">Participates actively in the response to hyperosmotic and heat shock by preventing the aggregation of stress-denatured proteins and by disaggregating proteins, also in an autonomous, DnaK-independent fashion. Unfolded proteins bind initially to DnaJ; upon interaction with the DnaJ-bound protein, DnaK hydrolyzes its bound ATP, resulting in the formation of a stable complex. GrpE releases ADP from DnaK; ATP binding to DnaK triggers the release of the substrate protein, thus completing the reaction cycle. Several rounds of ATP-dependent interactions between DnaJ, DnaK and GrpE are required for fully efficient folding. Also involved, together with DnaK and GrpE, in the DNA replication of plasmids through activation of initiation proteins.</text>
</comment>
<comment type="cofactor">
    <cofactor evidence="1">
        <name>Zn(2+)</name>
        <dbReference type="ChEBI" id="CHEBI:29105"/>
    </cofactor>
    <text evidence="1">Binds 2 Zn(2+) ions per monomer.</text>
</comment>
<comment type="subunit">
    <text evidence="1">Homodimer.</text>
</comment>
<comment type="subcellular location">
    <subcellularLocation>
        <location evidence="1">Cytoplasm</location>
    </subcellularLocation>
</comment>
<comment type="domain">
    <text evidence="1">The J domain is necessary and sufficient to stimulate DnaK ATPase activity. Zinc center 1 plays an important role in the autonomous, DnaK-independent chaperone activity of DnaJ. Zinc center 2 is essential for interaction with DnaK and for DnaJ activity.</text>
</comment>
<comment type="similarity">
    <text evidence="1">Belongs to the DnaJ family.</text>
</comment>
<name>DNAJ_DESHY</name>
<protein>
    <recommendedName>
        <fullName evidence="1">Chaperone protein DnaJ</fullName>
    </recommendedName>
</protein>